<accession>Q3E7A0</accession>
<accession>D6VXI1</accession>
<sequence length="39" mass="4678">MPFPSILHLTIGRYASYDSNNHMRRRAKLMEAIFRIRTI</sequence>
<feature type="chain" id="PRO_0000245419" description="Uncharacterized protein YKL106C-A">
    <location>
        <begin position="1"/>
        <end position="39"/>
    </location>
</feature>
<protein>
    <recommendedName>
        <fullName>Uncharacterized protein YKL106C-A</fullName>
    </recommendedName>
</protein>
<name>YK106_YEAST</name>
<dbReference type="EMBL" id="Z28107">
    <property type="status" value="NOT_ANNOTATED_CDS"/>
    <property type="molecule type" value="Genomic_DNA"/>
</dbReference>
<dbReference type="EMBL" id="BK006944">
    <property type="protein sequence ID" value="DAA09051.1"/>
    <property type="molecule type" value="Genomic_DNA"/>
</dbReference>
<dbReference type="RefSeq" id="NP_076898.1">
    <property type="nucleotide sequence ID" value="NM_001184482.1"/>
</dbReference>
<dbReference type="BioGRID" id="34027">
    <property type="interactions" value="47"/>
</dbReference>
<dbReference type="FunCoup" id="Q3E7A0">
    <property type="interactions" value="7"/>
</dbReference>
<dbReference type="STRING" id="4932.YKL106C-A"/>
<dbReference type="PaxDb" id="4932-YKL106C-A"/>
<dbReference type="EnsemblFungi" id="YKL106C-A_mRNA">
    <property type="protein sequence ID" value="YKL106C-A"/>
    <property type="gene ID" value="YKL106C-A"/>
</dbReference>
<dbReference type="GeneID" id="853754"/>
<dbReference type="KEGG" id="sce:YKL106C-A"/>
<dbReference type="AGR" id="SGD:S000007616"/>
<dbReference type="SGD" id="S000007616">
    <property type="gene designation" value="YKL106C-A"/>
</dbReference>
<dbReference type="VEuPathDB" id="FungiDB:YKL106C-A"/>
<dbReference type="HOGENOM" id="CLU_3320338_0_0_1"/>
<dbReference type="InParanoid" id="Q3E7A0"/>
<dbReference type="OrthoDB" id="10409321at2759"/>
<dbReference type="BioCyc" id="YEAST:G3O-32095-MONOMER"/>
<dbReference type="BioGRID-ORCS" id="853754">
    <property type="hits" value="2 hits in 10 CRISPR screens"/>
</dbReference>
<dbReference type="PRO" id="PR:Q3E7A0"/>
<dbReference type="Proteomes" id="UP000002311">
    <property type="component" value="Chromosome XI"/>
</dbReference>
<reference key="1">
    <citation type="journal article" date="1994" name="Nature">
        <title>Complete DNA sequence of yeast chromosome XI.</title>
        <authorList>
            <person name="Dujon B."/>
            <person name="Alexandraki D."/>
            <person name="Andre B."/>
            <person name="Ansorge W."/>
            <person name="Baladron V."/>
            <person name="Ballesta J.P.G."/>
            <person name="Banrevi A."/>
            <person name="Bolle P.-A."/>
            <person name="Bolotin-Fukuhara M."/>
            <person name="Bossier P."/>
            <person name="Bou G."/>
            <person name="Boyer J."/>
            <person name="Buitrago M.J."/>
            <person name="Cheret G."/>
            <person name="Colleaux L."/>
            <person name="Daignan-Fornier B."/>
            <person name="del Rey F."/>
            <person name="Dion C."/>
            <person name="Domdey H."/>
            <person name="Duesterhoeft A."/>
            <person name="Duesterhus S."/>
            <person name="Entian K.-D."/>
            <person name="Erfle H."/>
            <person name="Esteban P.F."/>
            <person name="Feldmann H."/>
            <person name="Fernandes L."/>
            <person name="Fobo G.M."/>
            <person name="Fritz C."/>
            <person name="Fukuhara H."/>
            <person name="Gabel C."/>
            <person name="Gaillon L."/>
            <person name="Garcia-Cantalejo J.M."/>
            <person name="Garcia-Ramirez J.J."/>
            <person name="Gent M.E."/>
            <person name="Ghazvini M."/>
            <person name="Goffeau A."/>
            <person name="Gonzalez A."/>
            <person name="Grothues D."/>
            <person name="Guerreiro P."/>
            <person name="Hegemann J.H."/>
            <person name="Hewitt N."/>
            <person name="Hilger F."/>
            <person name="Hollenberg C.P."/>
            <person name="Horaitis O."/>
            <person name="Indge K.J."/>
            <person name="Jacquier A."/>
            <person name="James C.M."/>
            <person name="Jauniaux J.-C."/>
            <person name="Jimenez A."/>
            <person name="Keuchel H."/>
            <person name="Kirchrath L."/>
            <person name="Kleine K."/>
            <person name="Koetter P."/>
            <person name="Legrain P."/>
            <person name="Liebl S."/>
            <person name="Louis E.J."/>
            <person name="Maia e Silva A."/>
            <person name="Marck C."/>
            <person name="Monnier A.-L."/>
            <person name="Moestl D."/>
            <person name="Mueller S."/>
            <person name="Obermaier B."/>
            <person name="Oliver S.G."/>
            <person name="Pallier C."/>
            <person name="Pascolo S."/>
            <person name="Pfeiffer F."/>
            <person name="Philippsen P."/>
            <person name="Planta R.J."/>
            <person name="Pohl F.M."/>
            <person name="Pohl T.M."/>
            <person name="Poehlmann R."/>
            <person name="Portetelle D."/>
            <person name="Purnelle B."/>
            <person name="Puzos V."/>
            <person name="Ramezani Rad M."/>
            <person name="Rasmussen S.W."/>
            <person name="Remacha M.A."/>
            <person name="Revuelta J.L."/>
            <person name="Richard G.-F."/>
            <person name="Rieger M."/>
            <person name="Rodrigues-Pousada C."/>
            <person name="Rose M."/>
            <person name="Rupp T."/>
            <person name="Santos M.A."/>
            <person name="Schwager C."/>
            <person name="Sensen C."/>
            <person name="Skala J."/>
            <person name="Soares H."/>
            <person name="Sor F."/>
            <person name="Stegemann J."/>
            <person name="Tettelin H."/>
            <person name="Thierry A."/>
            <person name="Tzermia M."/>
            <person name="Urrestarazu L.A."/>
            <person name="van Dyck L."/>
            <person name="van Vliet-Reedijk J.C."/>
            <person name="Valens M."/>
            <person name="Vandenbol M."/>
            <person name="Vilela C."/>
            <person name="Vissers S."/>
            <person name="von Wettstein D."/>
            <person name="Voss H."/>
            <person name="Wiemann S."/>
            <person name="Xu G."/>
            <person name="Zimmermann J."/>
            <person name="Haasemann M."/>
            <person name="Becker I."/>
            <person name="Mewes H.-W."/>
        </authorList>
    </citation>
    <scope>NUCLEOTIDE SEQUENCE [LARGE SCALE GENOMIC DNA]</scope>
    <source>
        <strain>ATCC 204508 / S288c</strain>
    </source>
</reference>
<reference key="2">
    <citation type="journal article" date="2014" name="G3 (Bethesda)">
        <title>The reference genome sequence of Saccharomyces cerevisiae: Then and now.</title>
        <authorList>
            <person name="Engel S.R."/>
            <person name="Dietrich F.S."/>
            <person name="Fisk D.G."/>
            <person name="Binkley G."/>
            <person name="Balakrishnan R."/>
            <person name="Costanzo M.C."/>
            <person name="Dwight S.S."/>
            <person name="Hitz B.C."/>
            <person name="Karra K."/>
            <person name="Nash R.S."/>
            <person name="Weng S."/>
            <person name="Wong E.D."/>
            <person name="Lloyd P."/>
            <person name="Skrzypek M.S."/>
            <person name="Miyasato S.R."/>
            <person name="Simison M."/>
            <person name="Cherry J.M."/>
        </authorList>
    </citation>
    <scope>GENOME REANNOTATION</scope>
    <source>
        <strain>ATCC 204508 / S288c</strain>
    </source>
</reference>
<reference key="3">
    <citation type="journal article" date="2000" name="FEBS Lett.">
        <title>Genomic exploration of the hemiascomycetous yeasts: 4. The genome of Saccharomyces cerevisiae revisited.</title>
        <authorList>
            <person name="Blandin G."/>
            <person name="Durrens P."/>
            <person name="Tekaia F."/>
            <person name="Aigle M."/>
            <person name="Bolotin-Fukuhara M."/>
            <person name="Bon E."/>
            <person name="Casaregola S."/>
            <person name="de Montigny J."/>
            <person name="Gaillardin C."/>
            <person name="Lepingle A."/>
            <person name="Llorente B."/>
            <person name="Malpertuy A."/>
            <person name="Neuveglise C."/>
            <person name="Ozier-Kalogeropoulos O."/>
            <person name="Perrin A."/>
            <person name="Potier S."/>
            <person name="Souciet J.-L."/>
            <person name="Talla E."/>
            <person name="Toffano-Nioche C."/>
            <person name="Wesolowski-Louvel M."/>
            <person name="Marck C."/>
            <person name="Dujon B."/>
        </authorList>
    </citation>
    <scope>GENOME REANNOTATION</scope>
</reference>
<keyword id="KW-1185">Reference proteome</keyword>
<organism>
    <name type="scientific">Saccharomyces cerevisiae (strain ATCC 204508 / S288c)</name>
    <name type="common">Baker's yeast</name>
    <dbReference type="NCBI Taxonomy" id="559292"/>
    <lineage>
        <taxon>Eukaryota</taxon>
        <taxon>Fungi</taxon>
        <taxon>Dikarya</taxon>
        <taxon>Ascomycota</taxon>
        <taxon>Saccharomycotina</taxon>
        <taxon>Saccharomycetes</taxon>
        <taxon>Saccharomycetales</taxon>
        <taxon>Saccharomycetaceae</taxon>
        <taxon>Saccharomyces</taxon>
    </lineage>
</organism>
<gene>
    <name type="ordered locus">YKL106C-A</name>
</gene>
<proteinExistence type="predicted"/>